<gene>
    <name type="primary">PIP2-5</name>
</gene>
<organism>
    <name type="scientific">Zea mays</name>
    <name type="common">Maize</name>
    <dbReference type="NCBI Taxonomy" id="4577"/>
    <lineage>
        <taxon>Eukaryota</taxon>
        <taxon>Viridiplantae</taxon>
        <taxon>Streptophyta</taxon>
        <taxon>Embryophyta</taxon>
        <taxon>Tracheophyta</taxon>
        <taxon>Spermatophyta</taxon>
        <taxon>Magnoliopsida</taxon>
        <taxon>Liliopsida</taxon>
        <taxon>Poales</taxon>
        <taxon>Poaceae</taxon>
        <taxon>PACMAD clade</taxon>
        <taxon>Panicoideae</taxon>
        <taxon>Andropogonodae</taxon>
        <taxon>Andropogoneae</taxon>
        <taxon>Tripsacinae</taxon>
        <taxon>Zea</taxon>
    </lineage>
</organism>
<proteinExistence type="evidence at protein level"/>
<sequence length="285" mass="29836">MAKDIEAAAAHEGKDYSDPPPAPLVDAEELTKWSLYRAVIAEFVATLLFLYITVATVIGYKHQTDAAASGPDAACGGVGVLGIAWAFGGMIFILVYCTAGVSGGHINPAVTFGLFLARKVSLVRALLYIVAQCLGAICGVGLVKGFQSAFYVRYGGGANELSAGYSKGTGLAAEIIGTFVLVYTVFSATDPKRNARDSHVPVLAPLPIGFAVFMVHLATIPITGTGINPARSLGAAVIYNNDKAWDDHWIFWVGPFIGAAIAAAYHQYVLRASAAKLGSSASFSR</sequence>
<feature type="chain" id="PRO_0000286022" description="Aquaporin PIP2-5">
    <location>
        <begin position="1"/>
        <end position="285"/>
    </location>
</feature>
<feature type="transmembrane region" description="Helical; Name=1" evidence="2">
    <location>
        <begin position="38"/>
        <end position="58"/>
    </location>
</feature>
<feature type="transmembrane region" description="Helical; Name=2" evidence="2">
    <location>
        <begin position="75"/>
        <end position="95"/>
    </location>
</feature>
<feature type="transmembrane region" description="Helical; Name=3" evidence="2">
    <location>
        <begin position="126"/>
        <end position="146"/>
    </location>
</feature>
<feature type="transmembrane region" description="Helical; Name=4" evidence="2">
    <location>
        <begin position="168"/>
        <end position="188"/>
    </location>
</feature>
<feature type="transmembrane region" description="Helical; Name=5" evidence="2">
    <location>
        <begin position="202"/>
        <end position="222"/>
    </location>
</feature>
<feature type="transmembrane region" description="Helical; Name=6" evidence="2">
    <location>
        <begin position="250"/>
        <end position="270"/>
    </location>
</feature>
<feature type="short sequence motif" description="NPA 1" evidence="1">
    <location>
        <begin position="107"/>
        <end position="109"/>
    </location>
</feature>
<feature type="short sequence motif" description="NPA 2" evidence="1">
    <location>
        <begin position="228"/>
        <end position="230"/>
    </location>
</feature>
<feature type="mutagenesis site" description="Loss of water transport." evidence="4">
    <original>G</original>
    <variation>W</variation>
    <location>
        <position position="104"/>
    </location>
</feature>
<reference key="1">
    <citation type="journal article" date="2001" name="Plant Physiol.">
        <title>Aquaporins constitute a large and highly divergent protein family in maize.</title>
        <authorList>
            <person name="Chaumont F."/>
            <person name="Barrieu F."/>
            <person name="Wojcik E."/>
            <person name="Chrispeels M.J."/>
            <person name="Jung R."/>
        </authorList>
    </citation>
    <scope>NUCLEOTIDE SEQUENCE [MRNA]</scope>
    <scope>GENE FAMILY</scope>
    <scope>NOMENCLATURE</scope>
    <source>
        <strain>cv. B73</strain>
        <tissue>Root</tissue>
    </source>
</reference>
<reference key="2">
    <citation type="journal article" date="2003" name="Plant Cell Physiol.">
        <title>Diurnal regulation of water transport and aquaporin gene expression in maize roots: contribution of PIP2 proteins.</title>
        <authorList>
            <person name="Lopez F."/>
            <person name="Bousser A."/>
            <person name="Sissoeff I."/>
            <person name="Gaspar M."/>
            <person name="Lachaise B."/>
            <person name="Hoarau J."/>
            <person name="Mahe A."/>
        </authorList>
    </citation>
    <scope>NUCLEOTIDE SEQUENCE [MRNA]</scope>
    <scope>INDUCTION</scope>
    <source>
        <tissue>Root</tissue>
    </source>
</reference>
<reference key="3">
    <citation type="journal article" date="2000" name="Plant Physiol.">
        <title>Plasma membrane intrinsic proteins from maize cluster in two sequence subgroups with differential aquaporin activity.</title>
        <authorList>
            <person name="Chaumont F."/>
            <person name="Barrieu F."/>
            <person name="Jung R."/>
            <person name="Chrispeels M.J."/>
        </authorList>
    </citation>
    <scope>FUNCTION</scope>
    <scope>TISSUE SPECIFICITY</scope>
</reference>
<reference key="4">
    <citation type="journal article" date="2004" name="Plant Cell">
        <title>Interactions between plasma membrane aquaporins modulate their water channel activity.</title>
        <authorList>
            <person name="Fetter K."/>
            <person name="van Wilder V."/>
            <person name="Moshelion M."/>
            <person name="Chaumont F."/>
        </authorList>
    </citation>
    <scope>FUNCTION</scope>
    <scope>SUBUNIT</scope>
    <scope>SUBCELLULAR LOCATION</scope>
    <scope>TISSUE SPECIFICITY</scope>
    <scope>MUTAGENESIS OF GLY-104</scope>
</reference>
<reference key="5">
    <citation type="journal article" date="2006" name="Plant Mol. Biol.">
        <title>Localization and quantification of plasma membrane aquaporin expression in maize primary root: a clue to understanding their role as cellular plumbers.</title>
        <authorList>
            <person name="Hachez C."/>
            <person name="Moshelion M."/>
            <person name="Zelazny E."/>
            <person name="Cavez D."/>
            <person name="Chaumont F."/>
        </authorList>
    </citation>
    <scope>FUNCTION</scope>
    <scope>TISSUE SPECIFICITY</scope>
</reference>
<keyword id="KW-1003">Cell membrane</keyword>
<keyword id="KW-0472">Membrane</keyword>
<keyword id="KW-1185">Reference proteome</keyword>
<keyword id="KW-0677">Repeat</keyword>
<keyword id="KW-0812">Transmembrane</keyword>
<keyword id="KW-1133">Transmembrane helix</keyword>
<keyword id="KW-0813">Transport</keyword>
<name>PIP25_MAIZE</name>
<dbReference type="EMBL" id="AF130975">
    <property type="protein sequence ID" value="AAD28761.1"/>
    <property type="molecule type" value="mRNA"/>
</dbReference>
<dbReference type="EMBL" id="AY243802">
    <property type="protein sequence ID" value="AAO86708.1"/>
    <property type="molecule type" value="mRNA"/>
</dbReference>
<dbReference type="RefSeq" id="NP_001105616.1">
    <property type="nucleotide sequence ID" value="NM_001112146.1"/>
</dbReference>
<dbReference type="SMR" id="Q9XF58"/>
<dbReference type="FunCoup" id="Q9XF58">
    <property type="interactions" value="312"/>
</dbReference>
<dbReference type="STRING" id="4577.Q9XF58"/>
<dbReference type="TCDB" id="1.A.8.11.7">
    <property type="family name" value="the major intrinsic protein (mip) family"/>
</dbReference>
<dbReference type="PaxDb" id="4577-GRMZM2G178693_P01"/>
<dbReference type="ProMEX" id="Q9XF58"/>
<dbReference type="EnsemblPlants" id="Zm00001eb077130_T001">
    <property type="protein sequence ID" value="Zm00001eb077130_P001"/>
    <property type="gene ID" value="Zm00001eb077130"/>
</dbReference>
<dbReference type="GeneID" id="542619"/>
<dbReference type="Gramene" id="Zm00001eb077130_T001">
    <property type="protein sequence ID" value="Zm00001eb077130_P001"/>
    <property type="gene ID" value="Zm00001eb077130"/>
</dbReference>
<dbReference type="KEGG" id="zma:542619"/>
<dbReference type="eggNOG" id="KOG0223">
    <property type="taxonomic scope" value="Eukaryota"/>
</dbReference>
<dbReference type="HOGENOM" id="CLU_020019_3_0_1"/>
<dbReference type="InParanoid" id="Q9XF58"/>
<dbReference type="OMA" id="FIFAPGA"/>
<dbReference type="OrthoDB" id="3222at2759"/>
<dbReference type="Proteomes" id="UP000007305">
    <property type="component" value="Chromosome 2"/>
</dbReference>
<dbReference type="ExpressionAtlas" id="Q9XF58">
    <property type="expression patterns" value="baseline and differential"/>
</dbReference>
<dbReference type="GO" id="GO:0016020">
    <property type="term" value="C:membrane"/>
    <property type="evidence" value="ECO:0000304"/>
    <property type="project" value="AgBase"/>
</dbReference>
<dbReference type="GO" id="GO:0005886">
    <property type="term" value="C:plasma membrane"/>
    <property type="evidence" value="ECO:0000314"/>
    <property type="project" value="AgBase"/>
</dbReference>
<dbReference type="GO" id="GO:0032991">
    <property type="term" value="C:protein-containing complex"/>
    <property type="evidence" value="ECO:0000304"/>
    <property type="project" value="AgBase"/>
</dbReference>
<dbReference type="GO" id="GO:0015250">
    <property type="term" value="F:water channel activity"/>
    <property type="evidence" value="ECO:0000318"/>
    <property type="project" value="GO_Central"/>
</dbReference>
<dbReference type="GO" id="GO:0051290">
    <property type="term" value="P:protein heterotetramerization"/>
    <property type="evidence" value="ECO:0000304"/>
    <property type="project" value="AgBase"/>
</dbReference>
<dbReference type="GO" id="GO:0051289">
    <property type="term" value="P:protein homotetramerization"/>
    <property type="evidence" value="ECO:0000304"/>
    <property type="project" value="AgBase"/>
</dbReference>
<dbReference type="CDD" id="cd00333">
    <property type="entry name" value="MIP"/>
    <property type="match status" value="1"/>
</dbReference>
<dbReference type="FunFam" id="1.20.1080.10:FF:000001">
    <property type="entry name" value="Probable aquaporin PIP1-2"/>
    <property type="match status" value="1"/>
</dbReference>
<dbReference type="Gene3D" id="1.20.1080.10">
    <property type="entry name" value="Glycerol uptake facilitator protein"/>
    <property type="match status" value="1"/>
</dbReference>
<dbReference type="InterPro" id="IPR023271">
    <property type="entry name" value="Aquaporin-like"/>
</dbReference>
<dbReference type="InterPro" id="IPR034294">
    <property type="entry name" value="Aquaporin_transptr"/>
</dbReference>
<dbReference type="InterPro" id="IPR000425">
    <property type="entry name" value="MIP"/>
</dbReference>
<dbReference type="InterPro" id="IPR022357">
    <property type="entry name" value="MIP_CS"/>
</dbReference>
<dbReference type="NCBIfam" id="TIGR00861">
    <property type="entry name" value="MIP"/>
    <property type="match status" value="1"/>
</dbReference>
<dbReference type="PANTHER" id="PTHR45687">
    <property type="entry name" value="AQUAPORIN OR AQUAGLYCEROPORIN RELATED"/>
    <property type="match status" value="1"/>
</dbReference>
<dbReference type="Pfam" id="PF00230">
    <property type="entry name" value="MIP"/>
    <property type="match status" value="1"/>
</dbReference>
<dbReference type="PRINTS" id="PR00783">
    <property type="entry name" value="MINTRINSICP"/>
</dbReference>
<dbReference type="SUPFAM" id="SSF81338">
    <property type="entry name" value="Aquaporin-like"/>
    <property type="match status" value="1"/>
</dbReference>
<dbReference type="PROSITE" id="PS00221">
    <property type="entry name" value="MIP"/>
    <property type="match status" value="1"/>
</dbReference>
<protein>
    <recommendedName>
        <fullName>Aquaporin PIP2-5</fullName>
    </recommendedName>
    <alternativeName>
        <fullName>Plasma membrane intrinsic protein 2-5</fullName>
    </alternativeName>
    <alternativeName>
        <fullName>ZmPIP2-5</fullName>
    </alternativeName>
    <alternativeName>
        <fullName>ZmPIP2;5</fullName>
    </alternativeName>
    <alternativeName>
        <fullName>ZmPIP2a</fullName>
    </alternativeName>
</protein>
<comment type="function">
    <text evidence="3 4 6">Water channel required to facilitate the transport of water across cell membrane. Its function is impaired by Hg(2+). May play a role in water uptake from the root surface. Active as homomers. Increased activity when heteromerization with PIP1-2.</text>
</comment>
<comment type="subunit">
    <text evidence="4">Homomers. May interact with PIP1-2 to form heteromers.</text>
</comment>
<comment type="subcellular location">
    <subcellularLocation>
        <location evidence="4">Cell membrane</location>
        <topology evidence="4">Multi-pass membrane protein</topology>
    </subcellularLocation>
</comment>
<comment type="tissue specificity">
    <text evidence="3 4 6">Specifically expressed in roots, in the exodermis, endodermis and xylem parenchyma. Polar localization to the external periclinal side of epidermal cells in root apices.</text>
</comment>
<comment type="induction">
    <text evidence="5">Expressed in roots with a circadian rhythm showing an increase at the end of the night period, a peak during the first part of the light period and then a decrease.</text>
</comment>
<comment type="domain">
    <text>Aquaporins contain two tandem repeats each containing three membrane-spanning domains and a pore-forming loop with the signature motif Asn-Pro-Ala (NPA).</text>
</comment>
<comment type="similarity">
    <text evidence="7">Belongs to the MIP/aquaporin (TC 1.A.8) family. PIP (TC 1.A.8.11) subfamily.</text>
</comment>
<evidence type="ECO:0000250" key="1"/>
<evidence type="ECO:0000255" key="2"/>
<evidence type="ECO:0000269" key="3">
    <source>
    </source>
</evidence>
<evidence type="ECO:0000269" key="4">
    <source>
    </source>
</evidence>
<evidence type="ECO:0000269" key="5">
    <source>
    </source>
</evidence>
<evidence type="ECO:0000269" key="6">
    <source>
    </source>
</evidence>
<evidence type="ECO:0000305" key="7"/>
<accession>Q9XF58</accession>